<accession>B7IPD8</accession>
<keyword id="KW-0131">Cell cycle</keyword>
<keyword id="KW-0132">Cell division</keyword>
<keyword id="KW-0133">Cell shape</keyword>
<keyword id="KW-0175">Coiled coil</keyword>
<keyword id="KW-0963">Cytoplasm</keyword>
<name>GPSB_BACC2</name>
<comment type="function">
    <text evidence="1">Divisome component that associates with the complex late in its assembly, after the Z-ring is formed, and is dependent on DivIC and PBP2B for its recruitment to the divisome. Together with EzrA, is a key component of the system that regulates PBP1 localization during cell cycle progression. Its main role could be the removal of PBP1 from the cell pole after pole maturation is completed. Also contributes to the recruitment of PBP1 to the division complex. Not essential for septum formation.</text>
</comment>
<comment type="subunit">
    <text evidence="1">Forms polymers through the coiled coil domains. Interacts with PBP1, MreC and EzrA.</text>
</comment>
<comment type="subcellular location">
    <subcellularLocation>
        <location evidence="1">Cytoplasm</location>
    </subcellularLocation>
    <text evidence="1">Shuttles between the lateral wall and the division site in a cell cycle-dependent manner.</text>
</comment>
<comment type="similarity">
    <text evidence="1">Belongs to the GpsB family.</text>
</comment>
<organism>
    <name type="scientific">Bacillus cereus (strain G9842)</name>
    <dbReference type="NCBI Taxonomy" id="405531"/>
    <lineage>
        <taxon>Bacteria</taxon>
        <taxon>Bacillati</taxon>
        <taxon>Bacillota</taxon>
        <taxon>Bacilli</taxon>
        <taxon>Bacillales</taxon>
        <taxon>Bacillaceae</taxon>
        <taxon>Bacillus</taxon>
        <taxon>Bacillus cereus group</taxon>
    </lineage>
</organism>
<evidence type="ECO:0000255" key="1">
    <source>
        <dbReference type="HAMAP-Rule" id="MF_02011"/>
    </source>
</evidence>
<gene>
    <name evidence="1" type="primary">gpsB</name>
    <name type="ordered locus">BCG9842_B3729</name>
</gene>
<dbReference type="EMBL" id="CP001186">
    <property type="protein sequence ID" value="ACK98297.1"/>
    <property type="molecule type" value="Genomic_DNA"/>
</dbReference>
<dbReference type="RefSeq" id="WP_000622431.1">
    <property type="nucleotide sequence ID" value="NC_011772.1"/>
</dbReference>
<dbReference type="SMR" id="B7IPD8"/>
<dbReference type="GeneID" id="67466037"/>
<dbReference type="KEGG" id="bcg:BCG9842_B3729"/>
<dbReference type="HOGENOM" id="CLU_140309_1_0_9"/>
<dbReference type="Proteomes" id="UP000006744">
    <property type="component" value="Chromosome"/>
</dbReference>
<dbReference type="GO" id="GO:0005737">
    <property type="term" value="C:cytoplasm"/>
    <property type="evidence" value="ECO:0007669"/>
    <property type="project" value="UniProtKB-SubCell"/>
</dbReference>
<dbReference type="GO" id="GO:0051301">
    <property type="term" value="P:cell division"/>
    <property type="evidence" value="ECO:0007669"/>
    <property type="project" value="UniProtKB-UniRule"/>
</dbReference>
<dbReference type="GO" id="GO:0008360">
    <property type="term" value="P:regulation of cell shape"/>
    <property type="evidence" value="ECO:0007669"/>
    <property type="project" value="UniProtKB-UniRule"/>
</dbReference>
<dbReference type="Gene3D" id="6.10.250.660">
    <property type="match status" value="1"/>
</dbReference>
<dbReference type="HAMAP" id="MF_02011">
    <property type="entry name" value="GpsB"/>
    <property type="match status" value="1"/>
</dbReference>
<dbReference type="InterPro" id="IPR011229">
    <property type="entry name" value="Cell_cycle_GpsB"/>
</dbReference>
<dbReference type="InterPro" id="IPR019933">
    <property type="entry name" value="DivIVA_domain"/>
</dbReference>
<dbReference type="InterPro" id="IPR007793">
    <property type="entry name" value="DivIVA_fam"/>
</dbReference>
<dbReference type="NCBIfam" id="TIGR03544">
    <property type="entry name" value="DivI1A_domain"/>
    <property type="match status" value="1"/>
</dbReference>
<dbReference type="NCBIfam" id="NF010725">
    <property type="entry name" value="PRK14127.1"/>
    <property type="match status" value="1"/>
</dbReference>
<dbReference type="PANTHER" id="PTHR35794:SF1">
    <property type="entry name" value="CELL CYCLE PROTEIN GPSB"/>
    <property type="match status" value="1"/>
</dbReference>
<dbReference type="PANTHER" id="PTHR35794">
    <property type="entry name" value="CELL DIVISION PROTEIN DIVIVA"/>
    <property type="match status" value="1"/>
</dbReference>
<dbReference type="Pfam" id="PF05103">
    <property type="entry name" value="DivIVA"/>
    <property type="match status" value="1"/>
</dbReference>
<dbReference type="PIRSF" id="PIRSF029938">
    <property type="entry name" value="UCP029938"/>
    <property type="match status" value="1"/>
</dbReference>
<reference key="1">
    <citation type="submission" date="2008-10" db="EMBL/GenBank/DDBJ databases">
        <title>Genome sequence of Bacillus cereus G9842.</title>
        <authorList>
            <person name="Dodson R.J."/>
            <person name="Durkin A.S."/>
            <person name="Rosovitz M.J."/>
            <person name="Rasko D.A."/>
            <person name="Hoffmaster A."/>
            <person name="Ravel J."/>
            <person name="Sutton G."/>
        </authorList>
    </citation>
    <scope>NUCLEOTIDE SEQUENCE [LARGE SCALE GENOMIC DNA]</scope>
    <source>
        <strain>G9842</strain>
    </source>
</reference>
<sequence length="111" mass="13048">MISDKIKLTAKDILEKEFKTGMRGYQQEEVDKFLDMIIKDYEAFHKEFEQLKQQNARLKRELEEQKLAVTQVPQQPVQTPVAQPVYNNTNTDILKRLSNLEKAVFGSKLYE</sequence>
<protein>
    <recommendedName>
        <fullName evidence="1">Cell cycle protein GpsB</fullName>
    </recommendedName>
    <alternativeName>
        <fullName evidence="1">Guiding PBP1-shuttling protein</fullName>
    </alternativeName>
</protein>
<feature type="chain" id="PRO_1000189489" description="Cell cycle protein GpsB">
    <location>
        <begin position="1"/>
        <end position="111"/>
    </location>
</feature>
<feature type="coiled-coil region" evidence="1">
    <location>
        <begin position="38"/>
        <end position="72"/>
    </location>
</feature>
<proteinExistence type="inferred from homology"/>